<dbReference type="EMBL" id="AE005174">
    <property type="protein sequence ID" value="AAG54987.1"/>
    <property type="molecule type" value="Genomic_DNA"/>
</dbReference>
<dbReference type="EMBL" id="BA000007">
    <property type="protein sequence ID" value="BAB34115.1"/>
    <property type="molecule type" value="Genomic_DNA"/>
</dbReference>
<dbReference type="PIR" id="D90715">
    <property type="entry name" value="D90715"/>
</dbReference>
<dbReference type="PIR" id="G85565">
    <property type="entry name" value="G85565"/>
</dbReference>
<dbReference type="RefSeq" id="NP_308719.1">
    <property type="nucleotide sequence ID" value="NC_002695.1"/>
</dbReference>
<dbReference type="RefSeq" id="WP_000272824.1">
    <property type="nucleotide sequence ID" value="NZ_VOAI01000012.1"/>
</dbReference>
<dbReference type="SMR" id="P0AER7"/>
<dbReference type="STRING" id="155864.Z0803"/>
<dbReference type="GeneID" id="917053"/>
<dbReference type="GeneID" id="93776829"/>
<dbReference type="KEGG" id="ece:Z0803"/>
<dbReference type="KEGG" id="ecs:ECs_0692"/>
<dbReference type="PATRIC" id="fig|386585.9.peg.806"/>
<dbReference type="eggNOG" id="COG0765">
    <property type="taxonomic scope" value="Bacteria"/>
</dbReference>
<dbReference type="HOGENOM" id="CLU_019602_1_1_6"/>
<dbReference type="OMA" id="PIKPISW"/>
<dbReference type="Proteomes" id="UP000000558">
    <property type="component" value="Chromosome"/>
</dbReference>
<dbReference type="Proteomes" id="UP000002519">
    <property type="component" value="Chromosome"/>
</dbReference>
<dbReference type="GO" id="GO:0043190">
    <property type="term" value="C:ATP-binding cassette (ABC) transporter complex"/>
    <property type="evidence" value="ECO:0007669"/>
    <property type="project" value="InterPro"/>
</dbReference>
<dbReference type="GO" id="GO:0022857">
    <property type="term" value="F:transmembrane transporter activity"/>
    <property type="evidence" value="ECO:0007669"/>
    <property type="project" value="InterPro"/>
</dbReference>
<dbReference type="GO" id="GO:0006865">
    <property type="term" value="P:amino acid transport"/>
    <property type="evidence" value="ECO:0007669"/>
    <property type="project" value="UniProtKB-KW"/>
</dbReference>
<dbReference type="CDD" id="cd06261">
    <property type="entry name" value="TM_PBP2"/>
    <property type="match status" value="1"/>
</dbReference>
<dbReference type="FunFam" id="1.10.3720.10:FF:000006">
    <property type="entry name" value="Glutamate/aspartate ABC transporter, permease protein GltK"/>
    <property type="match status" value="1"/>
</dbReference>
<dbReference type="Gene3D" id="1.10.3720.10">
    <property type="entry name" value="MetI-like"/>
    <property type="match status" value="1"/>
</dbReference>
<dbReference type="InterPro" id="IPR010065">
    <property type="entry name" value="AA_ABC_transptr_permease_3TM"/>
</dbReference>
<dbReference type="InterPro" id="IPR043429">
    <property type="entry name" value="ArtM/GltK/GlnP/TcyL/YhdX-like"/>
</dbReference>
<dbReference type="InterPro" id="IPR000515">
    <property type="entry name" value="MetI-like"/>
</dbReference>
<dbReference type="InterPro" id="IPR035906">
    <property type="entry name" value="MetI-like_sf"/>
</dbReference>
<dbReference type="NCBIfam" id="TIGR01726">
    <property type="entry name" value="HEQRo_perm_3TM"/>
    <property type="match status" value="1"/>
</dbReference>
<dbReference type="NCBIfam" id="NF011687">
    <property type="entry name" value="PRK15107.1"/>
    <property type="match status" value="1"/>
</dbReference>
<dbReference type="PANTHER" id="PTHR30614:SF1">
    <property type="entry name" value="GLUTAMATE_ASPARTATE IMPORT PERMEASE PROTEIN GLTK"/>
    <property type="match status" value="1"/>
</dbReference>
<dbReference type="PANTHER" id="PTHR30614">
    <property type="entry name" value="MEMBRANE COMPONENT OF AMINO ACID ABC TRANSPORTER"/>
    <property type="match status" value="1"/>
</dbReference>
<dbReference type="Pfam" id="PF00528">
    <property type="entry name" value="BPD_transp_1"/>
    <property type="match status" value="1"/>
</dbReference>
<dbReference type="SUPFAM" id="SSF161098">
    <property type="entry name" value="MetI-like"/>
    <property type="match status" value="1"/>
</dbReference>
<dbReference type="PROSITE" id="PS50928">
    <property type="entry name" value="ABC_TM1"/>
    <property type="match status" value="1"/>
</dbReference>
<gene>
    <name type="primary">gltK</name>
    <name type="ordered locus">Z0803</name>
    <name type="ordered locus">ECs0692</name>
</gene>
<evidence type="ECO:0000250" key="1">
    <source>
        <dbReference type="UniProtKB" id="P0AER5"/>
    </source>
</evidence>
<evidence type="ECO:0000255" key="2"/>
<evidence type="ECO:0000255" key="3">
    <source>
        <dbReference type="PROSITE-ProRule" id="PRU00441"/>
    </source>
</evidence>
<evidence type="ECO:0000305" key="4"/>
<protein>
    <recommendedName>
        <fullName evidence="1">Glutamate/aspartate import permease protein GltK</fullName>
    </recommendedName>
</protein>
<feature type="chain" id="PRO_0000060038" description="Glutamate/aspartate import permease protein GltK">
    <location>
        <begin position="1"/>
        <end position="224"/>
    </location>
</feature>
<feature type="topological domain" description="Periplasmic" evidence="4">
    <location>
        <begin position="1"/>
        <end position="19"/>
    </location>
</feature>
<feature type="transmembrane region" description="Helical" evidence="2">
    <location>
        <begin position="20"/>
        <end position="40"/>
    </location>
</feature>
<feature type="topological domain" description="Cytoplasmic" evidence="4">
    <location>
        <begin position="41"/>
        <end position="67"/>
    </location>
</feature>
<feature type="transmembrane region" description="Helical" evidence="2">
    <location>
        <begin position="68"/>
        <end position="88"/>
    </location>
</feature>
<feature type="topological domain" description="Periplasmic" evidence="4">
    <location>
        <begin position="89"/>
        <end position="94"/>
    </location>
</feature>
<feature type="transmembrane region" description="Helical" evidence="2">
    <location>
        <begin position="95"/>
        <end position="112"/>
    </location>
</feature>
<feature type="topological domain" description="Cytoplasmic" evidence="4">
    <location>
        <begin position="113"/>
        <end position="154"/>
    </location>
</feature>
<feature type="transmembrane region" description="Helical" evidence="2">
    <location>
        <begin position="155"/>
        <end position="175"/>
    </location>
</feature>
<feature type="topological domain" description="Periplasmic" evidence="4">
    <location>
        <begin position="176"/>
        <end position="196"/>
    </location>
</feature>
<feature type="transmembrane region" description="Helical" evidence="2">
    <location>
        <begin position="197"/>
        <end position="217"/>
    </location>
</feature>
<feature type="topological domain" description="Cytoplasmic" evidence="1">
    <location>
        <begin position="218"/>
        <end position="224"/>
    </location>
</feature>
<feature type="domain" description="ABC transmembrane type-1" evidence="3">
    <location>
        <begin position="20"/>
        <end position="216"/>
    </location>
</feature>
<reference key="1">
    <citation type="journal article" date="2001" name="Nature">
        <title>Genome sequence of enterohaemorrhagic Escherichia coli O157:H7.</title>
        <authorList>
            <person name="Perna N.T."/>
            <person name="Plunkett G. III"/>
            <person name="Burland V."/>
            <person name="Mau B."/>
            <person name="Glasner J.D."/>
            <person name="Rose D.J."/>
            <person name="Mayhew G.F."/>
            <person name="Evans P.S."/>
            <person name="Gregor J."/>
            <person name="Kirkpatrick H.A."/>
            <person name="Posfai G."/>
            <person name="Hackett J."/>
            <person name="Klink S."/>
            <person name="Boutin A."/>
            <person name="Shao Y."/>
            <person name="Miller L."/>
            <person name="Grotbeck E.J."/>
            <person name="Davis N.W."/>
            <person name="Lim A."/>
            <person name="Dimalanta E.T."/>
            <person name="Potamousis K."/>
            <person name="Apodaca J."/>
            <person name="Anantharaman T.S."/>
            <person name="Lin J."/>
            <person name="Yen G."/>
            <person name="Schwartz D.C."/>
            <person name="Welch R.A."/>
            <person name="Blattner F.R."/>
        </authorList>
    </citation>
    <scope>NUCLEOTIDE SEQUENCE [LARGE SCALE GENOMIC DNA]</scope>
    <source>
        <strain>O157:H7 / EDL933 / ATCC 700927 / EHEC</strain>
    </source>
</reference>
<reference key="2">
    <citation type="journal article" date="2001" name="DNA Res.">
        <title>Complete genome sequence of enterohemorrhagic Escherichia coli O157:H7 and genomic comparison with a laboratory strain K-12.</title>
        <authorList>
            <person name="Hayashi T."/>
            <person name="Makino K."/>
            <person name="Ohnishi M."/>
            <person name="Kurokawa K."/>
            <person name="Ishii K."/>
            <person name="Yokoyama K."/>
            <person name="Han C.-G."/>
            <person name="Ohtsubo E."/>
            <person name="Nakayama K."/>
            <person name="Murata T."/>
            <person name="Tanaka M."/>
            <person name="Tobe T."/>
            <person name="Iida T."/>
            <person name="Takami H."/>
            <person name="Honda T."/>
            <person name="Sasakawa C."/>
            <person name="Ogasawara N."/>
            <person name="Yasunaga T."/>
            <person name="Kuhara S."/>
            <person name="Shiba T."/>
            <person name="Hattori M."/>
            <person name="Shinagawa H."/>
        </authorList>
    </citation>
    <scope>NUCLEOTIDE SEQUENCE [LARGE SCALE GENOMIC DNA]</scope>
    <source>
        <strain>O157:H7 / Sakai / RIMD 0509952 / EHEC</strain>
    </source>
</reference>
<comment type="function">
    <text evidence="1">Part of the ABC transporter complex GltIJKL involved in glutamate and aspartate uptake. Probably responsible for the translocation of the substrate across the membrane.</text>
</comment>
<comment type="subunit">
    <text evidence="1">The complex is composed of two ATP-binding proteins (GltL), two transmembrane proteins (GltJ and GltK) and a solute-binding protein (GltI).</text>
</comment>
<comment type="subcellular location">
    <subcellularLocation>
        <location evidence="1">Cell inner membrane</location>
        <topology evidence="2">Multi-pass membrane protein</topology>
    </subcellularLocation>
</comment>
<comment type="similarity">
    <text evidence="4">Belongs to the binding-protein-dependent transport system permease family. HisMQ subfamily.</text>
</comment>
<keyword id="KW-0029">Amino-acid transport</keyword>
<keyword id="KW-0997">Cell inner membrane</keyword>
<keyword id="KW-1003">Cell membrane</keyword>
<keyword id="KW-0472">Membrane</keyword>
<keyword id="KW-1185">Reference proteome</keyword>
<keyword id="KW-0812">Transmembrane</keyword>
<keyword id="KW-1133">Transmembrane helix</keyword>
<keyword id="KW-0813">Transport</keyword>
<proteinExistence type="inferred from homology"/>
<accession>P0AER7</accession>
<accession>P41075</accession>
<organism>
    <name type="scientific">Escherichia coli O157:H7</name>
    <dbReference type="NCBI Taxonomy" id="83334"/>
    <lineage>
        <taxon>Bacteria</taxon>
        <taxon>Pseudomonadati</taxon>
        <taxon>Pseudomonadota</taxon>
        <taxon>Gammaproteobacteria</taxon>
        <taxon>Enterobacterales</taxon>
        <taxon>Enterobacteriaceae</taxon>
        <taxon>Escherichia</taxon>
    </lineage>
</organism>
<sequence length="224" mass="24915">MYEFDWSSIVPSLPYLLDGLVITLKITVTAVVIGILWGTMLAVMRLSSFAPVAWFAKAYVNVFRSIPLVMVLLWFYLIVPGFLQNVLGLSPKNDIRLISAMVAFSMFEAAYYSEIIRAGIQSISRGQSSAALALGMTHWQSMKLIILPQAFRAMVPLLLTQGIVLFQDTSLVYVLSLADFFRTASTIGERDGTQVEMILFAGFVYFVISLSASLLVSYLKRRTA</sequence>
<name>GLTK_ECO57</name>